<proteinExistence type="evidence at protein level"/>
<sequence length="81" mass="8830">MSHTVKIYDTCIGCTQCVRACPTDVLEMVPWDGCKAAQIASSPRTEDCVGCKRCETACPTDFLSIRVYLGAETTRSMGLAY</sequence>
<organism>
    <name type="scientific">Microchaete diplosiphon</name>
    <name type="common">Fremyella diplosiphon</name>
    <dbReference type="NCBI Taxonomy" id="1197"/>
    <lineage>
        <taxon>Bacteria</taxon>
        <taxon>Bacillati</taxon>
        <taxon>Cyanobacteriota</taxon>
        <taxon>Cyanophyceae</taxon>
        <taxon>Nostocales</taxon>
        <taxon>Rivulariaceae</taxon>
        <taxon>Microchaete</taxon>
    </lineage>
</organism>
<keyword id="KW-0004">4Fe-4S</keyword>
<keyword id="KW-0903">Direct protein sequencing</keyword>
<keyword id="KW-0249">Electron transport</keyword>
<keyword id="KW-0408">Iron</keyword>
<keyword id="KW-0411">Iron-sulfur</keyword>
<keyword id="KW-0472">Membrane</keyword>
<keyword id="KW-0479">Metal-binding</keyword>
<keyword id="KW-0560">Oxidoreductase</keyword>
<keyword id="KW-0602">Photosynthesis</keyword>
<keyword id="KW-0603">Photosystem I</keyword>
<keyword id="KW-0677">Repeat</keyword>
<keyword id="KW-0793">Thylakoid</keyword>
<keyword id="KW-0813">Transport</keyword>
<comment type="function">
    <text evidence="1">Apoprotein for the two 4Fe-4S centers FA and FB of photosystem I (PSI); essential for photochemical activity. FB is the terminal electron acceptor of PSI, donating electrons to ferredoxin. The C-terminus interacts with PsaA/B/D and helps assemble the protein into the PSI complex. Required for binding of PsaD and PsaE to PSI. PSI is a plastocyanin/cytochrome c6-ferredoxin oxidoreductase, converting photonic excitation into a charge separation, which transfers an electron from the donor P700 chlorophyll pair to the spectroscopically characterized acceptors A0, A1, FX, FA and FB in turn.</text>
</comment>
<comment type="catalytic activity">
    <reaction evidence="1">
        <text>reduced [plastocyanin] + hnu + oxidized [2Fe-2S]-[ferredoxin] = oxidized [plastocyanin] + reduced [2Fe-2S]-[ferredoxin]</text>
        <dbReference type="Rhea" id="RHEA:30407"/>
        <dbReference type="Rhea" id="RHEA-COMP:10000"/>
        <dbReference type="Rhea" id="RHEA-COMP:10001"/>
        <dbReference type="Rhea" id="RHEA-COMP:10039"/>
        <dbReference type="Rhea" id="RHEA-COMP:10040"/>
        <dbReference type="ChEBI" id="CHEBI:29036"/>
        <dbReference type="ChEBI" id="CHEBI:30212"/>
        <dbReference type="ChEBI" id="CHEBI:33737"/>
        <dbReference type="ChEBI" id="CHEBI:33738"/>
        <dbReference type="ChEBI" id="CHEBI:49552"/>
        <dbReference type="EC" id="1.97.1.12"/>
    </reaction>
</comment>
<comment type="cofactor">
    <cofactor evidence="1">
        <name>[4Fe-4S] cluster</name>
        <dbReference type="ChEBI" id="CHEBI:49883"/>
    </cofactor>
    <text evidence="1">Binds 2 [4Fe-4S] clusters. Cluster 2 is most probably the spectroscopically characterized electron acceptor FA and cluster 1 is most probably FB.</text>
</comment>
<comment type="subunit">
    <text evidence="1">The cyanobacterial PSI reaction center is composed of one copy each of PsaA,B,C,D,E,F,I,J,K,L,M and X, and forms trimeric complexes.</text>
</comment>
<comment type="subcellular location">
    <subcellularLocation>
        <location evidence="1">Cellular thylakoid membrane</location>
        <topology evidence="1">Peripheral membrane protein</topology>
        <orientation evidence="1">Cytoplasmic side</orientation>
    </subcellularLocation>
</comment>
<accession>P0A412</accession>
<accession>P23810</accession>
<reference key="1">
    <citation type="journal article" date="1991" name="Biol. Chem. Hoppe-Seyler">
        <title>The amino-acid sequence of three proteins of photosystem I of the cyanobacterium Fremyella diplosiphon (Calothrix sp PCC 7601).</title>
        <authorList>
            <person name="Mann K."/>
            <person name="Schlenkrich T."/>
            <person name="Bauer M."/>
            <person name="Huber R."/>
        </authorList>
    </citation>
    <scope>PROTEIN SEQUENCE OF 2-81</scope>
    <source>
        <strain>UTEX 590 / SAG B 1429-1b</strain>
    </source>
</reference>
<name>PSAC_MICDP</name>
<feature type="initiator methionine" description="Removed" evidence="2">
    <location>
        <position position="1"/>
    </location>
</feature>
<feature type="chain" id="PRO_0000062010" description="Photosystem I iron-sulfur center">
    <location>
        <begin position="2"/>
        <end position="81"/>
    </location>
</feature>
<feature type="domain" description="4Fe-4S ferredoxin-type 1" evidence="1">
    <location>
        <begin position="2"/>
        <end position="31"/>
    </location>
</feature>
<feature type="domain" description="4Fe-4S ferredoxin-type 2" evidence="1">
    <location>
        <begin position="39"/>
        <end position="68"/>
    </location>
</feature>
<feature type="binding site" evidence="1">
    <location>
        <position position="11"/>
    </location>
    <ligand>
        <name>[4Fe-4S] cluster</name>
        <dbReference type="ChEBI" id="CHEBI:49883"/>
        <label>1</label>
    </ligand>
</feature>
<feature type="binding site" evidence="1">
    <location>
        <position position="14"/>
    </location>
    <ligand>
        <name>[4Fe-4S] cluster</name>
        <dbReference type="ChEBI" id="CHEBI:49883"/>
        <label>1</label>
    </ligand>
</feature>
<feature type="binding site" evidence="1">
    <location>
        <position position="17"/>
    </location>
    <ligand>
        <name>[4Fe-4S] cluster</name>
        <dbReference type="ChEBI" id="CHEBI:49883"/>
        <label>1</label>
    </ligand>
</feature>
<feature type="binding site" evidence="1">
    <location>
        <position position="21"/>
    </location>
    <ligand>
        <name>[4Fe-4S] cluster</name>
        <dbReference type="ChEBI" id="CHEBI:49883"/>
        <label>2</label>
    </ligand>
</feature>
<feature type="binding site" evidence="1">
    <location>
        <position position="48"/>
    </location>
    <ligand>
        <name>[4Fe-4S] cluster</name>
        <dbReference type="ChEBI" id="CHEBI:49883"/>
        <label>2</label>
    </ligand>
</feature>
<feature type="binding site" evidence="1">
    <location>
        <position position="51"/>
    </location>
    <ligand>
        <name>[4Fe-4S] cluster</name>
        <dbReference type="ChEBI" id="CHEBI:49883"/>
        <label>2</label>
    </ligand>
</feature>
<feature type="binding site" evidence="1">
    <location>
        <position position="54"/>
    </location>
    <ligand>
        <name>[4Fe-4S] cluster</name>
        <dbReference type="ChEBI" id="CHEBI:49883"/>
        <label>2</label>
    </ligand>
</feature>
<feature type="binding site" evidence="1">
    <location>
        <position position="58"/>
    </location>
    <ligand>
        <name>[4Fe-4S] cluster</name>
        <dbReference type="ChEBI" id="CHEBI:49883"/>
        <label>1</label>
    </ligand>
</feature>
<gene>
    <name evidence="1" type="primary">psaC</name>
</gene>
<evidence type="ECO:0000255" key="1">
    <source>
        <dbReference type="HAMAP-Rule" id="MF_01303"/>
    </source>
</evidence>
<evidence type="ECO:0000269" key="2">
    <source>
    </source>
</evidence>
<dbReference type="EC" id="1.97.1.12" evidence="1"/>
<dbReference type="SMR" id="P0A412"/>
<dbReference type="GO" id="GO:0009522">
    <property type="term" value="C:photosystem I"/>
    <property type="evidence" value="ECO:0007669"/>
    <property type="project" value="UniProtKB-KW"/>
</dbReference>
<dbReference type="GO" id="GO:0031676">
    <property type="term" value="C:plasma membrane-derived thylakoid membrane"/>
    <property type="evidence" value="ECO:0007669"/>
    <property type="project" value="UniProtKB-SubCell"/>
</dbReference>
<dbReference type="GO" id="GO:0051539">
    <property type="term" value="F:4 iron, 4 sulfur cluster binding"/>
    <property type="evidence" value="ECO:0007669"/>
    <property type="project" value="UniProtKB-KW"/>
</dbReference>
<dbReference type="GO" id="GO:0009055">
    <property type="term" value="F:electron transfer activity"/>
    <property type="evidence" value="ECO:0007669"/>
    <property type="project" value="UniProtKB-UniRule"/>
</dbReference>
<dbReference type="GO" id="GO:0046872">
    <property type="term" value="F:metal ion binding"/>
    <property type="evidence" value="ECO:0007669"/>
    <property type="project" value="UniProtKB-KW"/>
</dbReference>
<dbReference type="GO" id="GO:0016491">
    <property type="term" value="F:oxidoreductase activity"/>
    <property type="evidence" value="ECO:0007669"/>
    <property type="project" value="UniProtKB-KW"/>
</dbReference>
<dbReference type="GO" id="GO:0009773">
    <property type="term" value="P:photosynthetic electron transport in photosystem I"/>
    <property type="evidence" value="ECO:0007669"/>
    <property type="project" value="InterPro"/>
</dbReference>
<dbReference type="FunFam" id="3.30.70.20:FF:000001">
    <property type="entry name" value="Photosystem I iron-sulfur center"/>
    <property type="match status" value="1"/>
</dbReference>
<dbReference type="Gene3D" id="3.30.70.20">
    <property type="match status" value="1"/>
</dbReference>
<dbReference type="HAMAP" id="MF_01303">
    <property type="entry name" value="PSI_PsaC"/>
    <property type="match status" value="1"/>
</dbReference>
<dbReference type="InterPro" id="IPR017896">
    <property type="entry name" value="4Fe4S_Fe-S-bd"/>
</dbReference>
<dbReference type="InterPro" id="IPR017900">
    <property type="entry name" value="4Fe4S_Fe_S_CS"/>
</dbReference>
<dbReference type="InterPro" id="IPR050157">
    <property type="entry name" value="PSI_iron-sulfur_center"/>
</dbReference>
<dbReference type="InterPro" id="IPR017491">
    <property type="entry name" value="PSI_PsaC"/>
</dbReference>
<dbReference type="NCBIfam" id="TIGR03048">
    <property type="entry name" value="PS_I_psaC"/>
    <property type="match status" value="1"/>
</dbReference>
<dbReference type="PANTHER" id="PTHR24960:SF79">
    <property type="entry name" value="PHOTOSYSTEM I IRON-SULFUR CENTER"/>
    <property type="match status" value="1"/>
</dbReference>
<dbReference type="PANTHER" id="PTHR24960">
    <property type="entry name" value="PHOTOSYSTEM I IRON-SULFUR CENTER-RELATED"/>
    <property type="match status" value="1"/>
</dbReference>
<dbReference type="Pfam" id="PF12838">
    <property type="entry name" value="Fer4_7"/>
    <property type="match status" value="1"/>
</dbReference>
<dbReference type="SUPFAM" id="SSF54862">
    <property type="entry name" value="4Fe-4S ferredoxins"/>
    <property type="match status" value="1"/>
</dbReference>
<dbReference type="PROSITE" id="PS00198">
    <property type="entry name" value="4FE4S_FER_1"/>
    <property type="match status" value="2"/>
</dbReference>
<dbReference type="PROSITE" id="PS51379">
    <property type="entry name" value="4FE4S_FER_2"/>
    <property type="match status" value="2"/>
</dbReference>
<protein>
    <recommendedName>
        <fullName evidence="1">Photosystem I iron-sulfur center</fullName>
        <ecNumber evidence="1">1.97.1.12</ecNumber>
    </recommendedName>
    <alternativeName>
        <fullName evidence="1">9 kDa polypeptide</fullName>
    </alternativeName>
    <alternativeName>
        <fullName evidence="1">PSI-C</fullName>
    </alternativeName>
    <alternativeName>
        <fullName evidence="1">Photosystem I subunit VII</fullName>
    </alternativeName>
    <alternativeName>
        <fullName evidence="1">PsaC</fullName>
    </alternativeName>
</protein>